<proteinExistence type="inferred from homology"/>
<sequence>MTEPAKREDSGLPEAVTAIRPEVAAFKPYAPGLSIDEIKERYGLSQVVKMASNENPLGTSPLVQQTLRTHADLAFRYVQSGNPRLVSAIARSFGVAAESVVTGNGSDEVIDLIIRVKARPGKHNIVAFNPCFSMYELQTRFCGVEFRQVPLRADFSFDYDAFVGAADADTAVAFITTPDNPSGYCPPVEEIIDLARRLPSSCLLVVDEAYMDFADDPAAHSVLPHLTEFPNVAVLRTFSKSYGLAGLRLGFGVMHPALADYVKRVRLPFSINILAEYAGIAALQDTTFHAQTLRVTREGRTYLTGALTEAGCTVYPSAANFIMFALPENCPHDARAVFEALLRRGIIIRPLSSYNLPQCLRVSIGNRHENELFIAQFKELLRG</sequence>
<feature type="chain" id="PRO_0000230214" description="Histidinol-phosphate aminotransferase">
    <location>
        <begin position="1"/>
        <end position="383"/>
    </location>
</feature>
<feature type="modified residue" description="N6-(pyridoxal phosphate)lysine" evidence="1">
    <location>
        <position position="240"/>
    </location>
</feature>
<comment type="catalytic activity">
    <reaction evidence="1">
        <text>L-histidinol phosphate + 2-oxoglutarate = 3-(imidazol-4-yl)-2-oxopropyl phosphate + L-glutamate</text>
        <dbReference type="Rhea" id="RHEA:23744"/>
        <dbReference type="ChEBI" id="CHEBI:16810"/>
        <dbReference type="ChEBI" id="CHEBI:29985"/>
        <dbReference type="ChEBI" id="CHEBI:57766"/>
        <dbReference type="ChEBI" id="CHEBI:57980"/>
        <dbReference type="EC" id="2.6.1.9"/>
    </reaction>
</comment>
<comment type="cofactor">
    <cofactor evidence="1">
        <name>pyridoxal 5'-phosphate</name>
        <dbReference type="ChEBI" id="CHEBI:597326"/>
    </cofactor>
</comment>
<comment type="pathway">
    <text evidence="1">Amino-acid biosynthesis; L-histidine biosynthesis; L-histidine from 5-phospho-alpha-D-ribose 1-diphosphate: step 7/9.</text>
</comment>
<comment type="subunit">
    <text evidence="1">Homodimer.</text>
</comment>
<comment type="similarity">
    <text evidence="1">Belongs to the class-II pyridoxal-phosphate-dependent aminotransferase family. Histidinol-phosphate aminotransferase subfamily.</text>
</comment>
<gene>
    <name evidence="1" type="primary">hisC</name>
    <name type="ordered locus">Dde_1453</name>
</gene>
<evidence type="ECO:0000255" key="1">
    <source>
        <dbReference type="HAMAP-Rule" id="MF_01023"/>
    </source>
</evidence>
<dbReference type="EC" id="2.6.1.9" evidence="1"/>
<dbReference type="EMBL" id="CP000112">
    <property type="protein sequence ID" value="ABB38252.1"/>
    <property type="molecule type" value="Genomic_DNA"/>
</dbReference>
<dbReference type="RefSeq" id="WP_011367420.1">
    <property type="nucleotide sequence ID" value="NC_007519.1"/>
</dbReference>
<dbReference type="SMR" id="Q311Z4"/>
<dbReference type="STRING" id="207559.Dde_1453"/>
<dbReference type="KEGG" id="dde:Dde_1453"/>
<dbReference type="eggNOG" id="COG0079">
    <property type="taxonomic scope" value="Bacteria"/>
</dbReference>
<dbReference type="HOGENOM" id="CLU_017584_3_3_7"/>
<dbReference type="UniPathway" id="UPA00031">
    <property type="reaction ID" value="UER00012"/>
</dbReference>
<dbReference type="Proteomes" id="UP000002710">
    <property type="component" value="Chromosome"/>
</dbReference>
<dbReference type="GO" id="GO:0004400">
    <property type="term" value="F:histidinol-phosphate transaminase activity"/>
    <property type="evidence" value="ECO:0007669"/>
    <property type="project" value="UniProtKB-UniRule"/>
</dbReference>
<dbReference type="GO" id="GO:0030170">
    <property type="term" value="F:pyridoxal phosphate binding"/>
    <property type="evidence" value="ECO:0007669"/>
    <property type="project" value="InterPro"/>
</dbReference>
<dbReference type="GO" id="GO:0000105">
    <property type="term" value="P:L-histidine biosynthetic process"/>
    <property type="evidence" value="ECO:0007669"/>
    <property type="project" value="UniProtKB-UniRule"/>
</dbReference>
<dbReference type="CDD" id="cd00609">
    <property type="entry name" value="AAT_like"/>
    <property type="match status" value="1"/>
</dbReference>
<dbReference type="Gene3D" id="3.90.1150.10">
    <property type="entry name" value="Aspartate Aminotransferase, domain 1"/>
    <property type="match status" value="1"/>
</dbReference>
<dbReference type="Gene3D" id="3.40.640.10">
    <property type="entry name" value="Type I PLP-dependent aspartate aminotransferase-like (Major domain)"/>
    <property type="match status" value="1"/>
</dbReference>
<dbReference type="HAMAP" id="MF_01023">
    <property type="entry name" value="HisC_aminotrans_2"/>
    <property type="match status" value="1"/>
</dbReference>
<dbReference type="InterPro" id="IPR001917">
    <property type="entry name" value="Aminotrans_II_pyridoxalP_BS"/>
</dbReference>
<dbReference type="InterPro" id="IPR004839">
    <property type="entry name" value="Aminotransferase_I/II_large"/>
</dbReference>
<dbReference type="InterPro" id="IPR005861">
    <property type="entry name" value="HisP_aminotrans"/>
</dbReference>
<dbReference type="InterPro" id="IPR050106">
    <property type="entry name" value="HistidinolP_aminotransfase"/>
</dbReference>
<dbReference type="InterPro" id="IPR015424">
    <property type="entry name" value="PyrdxlP-dep_Trfase"/>
</dbReference>
<dbReference type="InterPro" id="IPR015421">
    <property type="entry name" value="PyrdxlP-dep_Trfase_major"/>
</dbReference>
<dbReference type="InterPro" id="IPR015422">
    <property type="entry name" value="PyrdxlP-dep_Trfase_small"/>
</dbReference>
<dbReference type="NCBIfam" id="TIGR01141">
    <property type="entry name" value="hisC"/>
    <property type="match status" value="1"/>
</dbReference>
<dbReference type="PANTHER" id="PTHR43643:SF3">
    <property type="entry name" value="HISTIDINOL-PHOSPHATE AMINOTRANSFERASE"/>
    <property type="match status" value="1"/>
</dbReference>
<dbReference type="PANTHER" id="PTHR43643">
    <property type="entry name" value="HISTIDINOL-PHOSPHATE AMINOTRANSFERASE 2"/>
    <property type="match status" value="1"/>
</dbReference>
<dbReference type="Pfam" id="PF00155">
    <property type="entry name" value="Aminotran_1_2"/>
    <property type="match status" value="1"/>
</dbReference>
<dbReference type="SUPFAM" id="SSF53383">
    <property type="entry name" value="PLP-dependent transferases"/>
    <property type="match status" value="1"/>
</dbReference>
<dbReference type="PROSITE" id="PS00599">
    <property type="entry name" value="AA_TRANSFER_CLASS_2"/>
    <property type="match status" value="1"/>
</dbReference>
<accession>Q311Z4</accession>
<protein>
    <recommendedName>
        <fullName evidence="1">Histidinol-phosphate aminotransferase</fullName>
        <ecNumber evidence="1">2.6.1.9</ecNumber>
    </recommendedName>
    <alternativeName>
        <fullName evidence="1">Imidazole acetol-phosphate transaminase</fullName>
    </alternativeName>
</protein>
<keyword id="KW-0028">Amino-acid biosynthesis</keyword>
<keyword id="KW-0032">Aminotransferase</keyword>
<keyword id="KW-0368">Histidine biosynthesis</keyword>
<keyword id="KW-0663">Pyridoxal phosphate</keyword>
<keyword id="KW-1185">Reference proteome</keyword>
<keyword id="KW-0808">Transferase</keyword>
<name>HIS8_OLEA2</name>
<organism>
    <name type="scientific">Oleidesulfovibrio alaskensis (strain ATCC BAA-1058 / DSM 17464 / G20)</name>
    <name type="common">Desulfovibrio alaskensis</name>
    <dbReference type="NCBI Taxonomy" id="207559"/>
    <lineage>
        <taxon>Bacteria</taxon>
        <taxon>Pseudomonadati</taxon>
        <taxon>Thermodesulfobacteriota</taxon>
        <taxon>Desulfovibrionia</taxon>
        <taxon>Desulfovibrionales</taxon>
        <taxon>Desulfovibrionaceae</taxon>
        <taxon>Oleidesulfovibrio</taxon>
    </lineage>
</organism>
<reference key="1">
    <citation type="journal article" date="2011" name="J. Bacteriol.">
        <title>Complete genome sequence and updated annotation of Desulfovibrio alaskensis G20.</title>
        <authorList>
            <person name="Hauser L.J."/>
            <person name="Land M.L."/>
            <person name="Brown S.D."/>
            <person name="Larimer F."/>
            <person name="Keller K.L."/>
            <person name="Rapp-Giles B.J."/>
            <person name="Price M.N."/>
            <person name="Lin M."/>
            <person name="Bruce D.C."/>
            <person name="Detter J.C."/>
            <person name="Tapia R."/>
            <person name="Han C.S."/>
            <person name="Goodwin L.A."/>
            <person name="Cheng J.F."/>
            <person name="Pitluck S."/>
            <person name="Copeland A."/>
            <person name="Lucas S."/>
            <person name="Nolan M."/>
            <person name="Lapidus A.L."/>
            <person name="Palumbo A.V."/>
            <person name="Wall J.D."/>
        </authorList>
    </citation>
    <scope>NUCLEOTIDE SEQUENCE [LARGE SCALE GENOMIC DNA]</scope>
    <source>
        <strain>ATCC BAA-1058 / DSM 17464 / G20</strain>
    </source>
</reference>